<evidence type="ECO:0000255" key="1">
    <source>
        <dbReference type="HAMAP-Rule" id="MF_00373"/>
    </source>
</evidence>
<evidence type="ECO:0000305" key="2"/>
<feature type="chain" id="PRO_0000178567" description="Large ribosomal subunit protein bL28">
    <location>
        <begin position="1"/>
        <end position="62"/>
    </location>
</feature>
<comment type="similarity">
    <text evidence="1">Belongs to the bacterial ribosomal protein bL28 family.</text>
</comment>
<keyword id="KW-0687">Ribonucleoprotein</keyword>
<keyword id="KW-0689">Ribosomal protein</keyword>
<gene>
    <name evidence="1" type="primary">rpmB</name>
    <name type="ordered locus">M6_Spy1615</name>
</gene>
<dbReference type="EMBL" id="CP000003">
    <property type="protein sequence ID" value="AAT87750.1"/>
    <property type="molecule type" value="Genomic_DNA"/>
</dbReference>
<dbReference type="RefSeq" id="WP_002982870.1">
    <property type="nucleotide sequence ID" value="NC_006086.1"/>
</dbReference>
<dbReference type="SMR" id="Q5XA13"/>
<dbReference type="GeneID" id="83705580"/>
<dbReference type="KEGG" id="spa:M6_Spy1615"/>
<dbReference type="HOGENOM" id="CLU_064548_7_1_9"/>
<dbReference type="Proteomes" id="UP000001167">
    <property type="component" value="Chromosome"/>
</dbReference>
<dbReference type="GO" id="GO:1990904">
    <property type="term" value="C:ribonucleoprotein complex"/>
    <property type="evidence" value="ECO:0007669"/>
    <property type="project" value="UniProtKB-KW"/>
</dbReference>
<dbReference type="GO" id="GO:0005840">
    <property type="term" value="C:ribosome"/>
    <property type="evidence" value="ECO:0007669"/>
    <property type="project" value="UniProtKB-KW"/>
</dbReference>
<dbReference type="GO" id="GO:0003735">
    <property type="term" value="F:structural constituent of ribosome"/>
    <property type="evidence" value="ECO:0007669"/>
    <property type="project" value="InterPro"/>
</dbReference>
<dbReference type="GO" id="GO:0006412">
    <property type="term" value="P:translation"/>
    <property type="evidence" value="ECO:0007669"/>
    <property type="project" value="UniProtKB-UniRule"/>
</dbReference>
<dbReference type="Gene3D" id="2.30.170.40">
    <property type="entry name" value="Ribosomal protein L28/L24"/>
    <property type="match status" value="1"/>
</dbReference>
<dbReference type="HAMAP" id="MF_00373">
    <property type="entry name" value="Ribosomal_bL28"/>
    <property type="match status" value="1"/>
</dbReference>
<dbReference type="InterPro" id="IPR050096">
    <property type="entry name" value="Bacterial_rp_bL28"/>
</dbReference>
<dbReference type="InterPro" id="IPR026569">
    <property type="entry name" value="Ribosomal_bL28"/>
</dbReference>
<dbReference type="InterPro" id="IPR034704">
    <property type="entry name" value="Ribosomal_bL28/bL31-like_sf"/>
</dbReference>
<dbReference type="InterPro" id="IPR001383">
    <property type="entry name" value="Ribosomal_bL28_bact-type"/>
</dbReference>
<dbReference type="InterPro" id="IPR037147">
    <property type="entry name" value="Ribosomal_bL28_sf"/>
</dbReference>
<dbReference type="NCBIfam" id="TIGR00009">
    <property type="entry name" value="L28"/>
    <property type="match status" value="1"/>
</dbReference>
<dbReference type="PANTHER" id="PTHR39080">
    <property type="entry name" value="50S RIBOSOMAL PROTEIN L28"/>
    <property type="match status" value="1"/>
</dbReference>
<dbReference type="PANTHER" id="PTHR39080:SF1">
    <property type="entry name" value="LARGE RIBOSOMAL SUBUNIT PROTEIN BL28A"/>
    <property type="match status" value="1"/>
</dbReference>
<dbReference type="Pfam" id="PF00830">
    <property type="entry name" value="Ribosomal_L28"/>
    <property type="match status" value="1"/>
</dbReference>
<dbReference type="SUPFAM" id="SSF143800">
    <property type="entry name" value="L28p-like"/>
    <property type="match status" value="1"/>
</dbReference>
<organism>
    <name type="scientific">Streptococcus pyogenes serotype M6 (strain ATCC BAA-946 / MGAS10394)</name>
    <dbReference type="NCBI Taxonomy" id="286636"/>
    <lineage>
        <taxon>Bacteria</taxon>
        <taxon>Bacillati</taxon>
        <taxon>Bacillota</taxon>
        <taxon>Bacilli</taxon>
        <taxon>Lactobacillales</taxon>
        <taxon>Streptococcaceae</taxon>
        <taxon>Streptococcus</taxon>
    </lineage>
</organism>
<name>RL28_STRP6</name>
<sequence>MAKVCYFTGRKTVSGNNRSHAMNQTKRTVKPNLQKVTILVDGKPKKVWASARALKSGKVERI</sequence>
<protein>
    <recommendedName>
        <fullName evidence="1">Large ribosomal subunit protein bL28</fullName>
    </recommendedName>
    <alternativeName>
        <fullName evidence="2">50S ribosomal protein L28</fullName>
    </alternativeName>
</protein>
<accession>Q5XA13</accession>
<reference key="1">
    <citation type="journal article" date="2004" name="J. Infect. Dis.">
        <title>Progress toward characterization of the group A Streptococcus metagenome: complete genome sequence of a macrolide-resistant serotype M6 strain.</title>
        <authorList>
            <person name="Banks D.J."/>
            <person name="Porcella S.F."/>
            <person name="Barbian K.D."/>
            <person name="Beres S.B."/>
            <person name="Philips L.E."/>
            <person name="Voyich J.M."/>
            <person name="DeLeo F.R."/>
            <person name="Martin J.M."/>
            <person name="Somerville G.A."/>
            <person name="Musser J.M."/>
        </authorList>
    </citation>
    <scope>NUCLEOTIDE SEQUENCE [LARGE SCALE GENOMIC DNA]</scope>
    <source>
        <strain>ATCC BAA-946 / MGAS10394</strain>
    </source>
</reference>
<proteinExistence type="inferred from homology"/>